<organism>
    <name type="scientific">Streptococcus pyogenes serotype M3 (strain SSI-1)</name>
    <dbReference type="NCBI Taxonomy" id="193567"/>
    <lineage>
        <taxon>Bacteria</taxon>
        <taxon>Bacillati</taxon>
        <taxon>Bacillota</taxon>
        <taxon>Bacilli</taxon>
        <taxon>Lactobacillales</taxon>
        <taxon>Streptococcaceae</taxon>
        <taxon>Streptococcus</taxon>
    </lineage>
</organism>
<reference key="1">
    <citation type="journal article" date="2003" name="Genome Res.">
        <title>Genome sequence of an M3 strain of Streptococcus pyogenes reveals a large-scale genomic rearrangement in invasive strains and new insights into phage evolution.</title>
        <authorList>
            <person name="Nakagawa I."/>
            <person name="Kurokawa K."/>
            <person name="Yamashita A."/>
            <person name="Nakata M."/>
            <person name="Tomiyasu Y."/>
            <person name="Okahashi N."/>
            <person name="Kawabata S."/>
            <person name="Yamazaki K."/>
            <person name="Shiba T."/>
            <person name="Yasunaga T."/>
            <person name="Hayashi H."/>
            <person name="Hattori M."/>
            <person name="Hamada S."/>
        </authorList>
    </citation>
    <scope>NUCLEOTIDE SEQUENCE [LARGE SCALE GENOMIC DNA]</scope>
    <source>
        <strain>SSI-1</strain>
    </source>
</reference>
<sequence>MTENEQIFWNRVLELAQSQLKQATYEFFVHDARLLKVDKHIATIYLDQMKELFWEKNLKDVILTAGFEVYNAQISVDYVFEEDLMIEQNQTKINQKPKQQALNSLPTVTSDLNSKYSFENFIQGDENRWAVAASIAVANTPGTTYNPLFIWGGPGLGKTHLLNAIGNSVLLENPNARIKYITAENFINEFVIHIRLDTMDELKEKFRNLDLLLIDDIQSLAKKTLSGTQEEFFNTFNALHNNNKQIVLTSDRTPDHLNDLEDRLVTRFKWGLTVNITPPDFETRVAILTNKIQEYNFIFPQDTIEYLAGQFDSNVRDLEGALKDISLVANFKQIDTITVDIAAEAIRARKQDGPKMTVIPIEEIQAQVGKFYGVTVKEIKATKRTQNIVLARQVAMFLAREMTDNSLPKIGKEFGGRDHSTVLHAYNKIKNMISQDESLRIEIETIKNKIK</sequence>
<comment type="function">
    <text evidence="1">Plays an essential role in the initiation and regulation of chromosomal replication. ATP-DnaA binds to the origin of replication (oriC) to initiate formation of the DNA replication initiation complex once per cell cycle. Binds the DnaA box (a 9 base pair repeat at the origin) and separates the double-stranded (ds)DNA. Forms a right-handed helical filament on oriC DNA; dsDNA binds to the exterior of the filament while single-stranded (ss)DNA is stabiized in the filament's interior. The ATP-DnaA-oriC complex binds and stabilizes one strand of the AT-rich DNA unwinding element (DUE), permitting loading of DNA polymerase. After initiation quickly degrades to an ADP-DnaA complex that is not apt for DNA replication. Binds acidic phospholipids.</text>
</comment>
<comment type="subunit">
    <text evidence="1">Oligomerizes as a right-handed, spiral filament on DNA at oriC.</text>
</comment>
<comment type="subcellular location">
    <subcellularLocation>
        <location evidence="1">Cytoplasm</location>
    </subcellularLocation>
</comment>
<comment type="domain">
    <text evidence="1">Domain I is involved in oligomerization and binding regulators, domain II is flexibile and of varying length in different bacteria, domain III forms the AAA+ region, while domain IV binds dsDNA.</text>
</comment>
<comment type="similarity">
    <text evidence="1">Belongs to the DnaA family.</text>
</comment>
<dbReference type="EMBL" id="BA000034">
    <property type="protein sequence ID" value="BAC63096.1"/>
    <property type="molecule type" value="Genomic_DNA"/>
</dbReference>
<dbReference type="RefSeq" id="WP_002987659.1">
    <property type="nucleotide sequence ID" value="NC_004606.1"/>
</dbReference>
<dbReference type="SMR" id="P0DA69"/>
<dbReference type="GeneID" id="69899953"/>
<dbReference type="KEGG" id="sps:SPs0001"/>
<dbReference type="HOGENOM" id="CLU_026910_3_2_9"/>
<dbReference type="GO" id="GO:0005737">
    <property type="term" value="C:cytoplasm"/>
    <property type="evidence" value="ECO:0007669"/>
    <property type="project" value="UniProtKB-SubCell"/>
</dbReference>
<dbReference type="GO" id="GO:0005886">
    <property type="term" value="C:plasma membrane"/>
    <property type="evidence" value="ECO:0007669"/>
    <property type="project" value="TreeGrafter"/>
</dbReference>
<dbReference type="GO" id="GO:0005524">
    <property type="term" value="F:ATP binding"/>
    <property type="evidence" value="ECO:0007669"/>
    <property type="project" value="UniProtKB-UniRule"/>
</dbReference>
<dbReference type="GO" id="GO:0016887">
    <property type="term" value="F:ATP hydrolysis activity"/>
    <property type="evidence" value="ECO:0007669"/>
    <property type="project" value="InterPro"/>
</dbReference>
<dbReference type="GO" id="GO:0003688">
    <property type="term" value="F:DNA replication origin binding"/>
    <property type="evidence" value="ECO:0007669"/>
    <property type="project" value="UniProtKB-UniRule"/>
</dbReference>
<dbReference type="GO" id="GO:0008289">
    <property type="term" value="F:lipid binding"/>
    <property type="evidence" value="ECO:0007669"/>
    <property type="project" value="UniProtKB-KW"/>
</dbReference>
<dbReference type="GO" id="GO:0006270">
    <property type="term" value="P:DNA replication initiation"/>
    <property type="evidence" value="ECO:0007669"/>
    <property type="project" value="UniProtKB-UniRule"/>
</dbReference>
<dbReference type="GO" id="GO:0006275">
    <property type="term" value="P:regulation of DNA replication"/>
    <property type="evidence" value="ECO:0007669"/>
    <property type="project" value="UniProtKB-UniRule"/>
</dbReference>
<dbReference type="CDD" id="cd00009">
    <property type="entry name" value="AAA"/>
    <property type="match status" value="1"/>
</dbReference>
<dbReference type="CDD" id="cd06571">
    <property type="entry name" value="Bac_DnaA_C"/>
    <property type="match status" value="1"/>
</dbReference>
<dbReference type="FunFam" id="1.10.1750.10:FF:000002">
    <property type="entry name" value="Chromosomal replication initiator protein DnaA"/>
    <property type="match status" value="1"/>
</dbReference>
<dbReference type="FunFam" id="3.40.50.300:FF:000668">
    <property type="entry name" value="Chromosomal replication initiator protein DnaA"/>
    <property type="match status" value="1"/>
</dbReference>
<dbReference type="Gene3D" id="1.10.1750.10">
    <property type="match status" value="1"/>
</dbReference>
<dbReference type="Gene3D" id="1.10.8.60">
    <property type="match status" value="1"/>
</dbReference>
<dbReference type="Gene3D" id="3.40.50.300">
    <property type="entry name" value="P-loop containing nucleotide triphosphate hydrolases"/>
    <property type="match status" value="1"/>
</dbReference>
<dbReference type="HAMAP" id="MF_00377">
    <property type="entry name" value="DnaA_bact"/>
    <property type="match status" value="1"/>
</dbReference>
<dbReference type="InterPro" id="IPR003593">
    <property type="entry name" value="AAA+_ATPase"/>
</dbReference>
<dbReference type="InterPro" id="IPR001957">
    <property type="entry name" value="Chromosome_initiator_DnaA"/>
</dbReference>
<dbReference type="InterPro" id="IPR020591">
    <property type="entry name" value="Chromosome_initiator_DnaA-like"/>
</dbReference>
<dbReference type="InterPro" id="IPR018312">
    <property type="entry name" value="Chromosome_initiator_DnaA_CS"/>
</dbReference>
<dbReference type="InterPro" id="IPR013159">
    <property type="entry name" value="DnaA_C"/>
</dbReference>
<dbReference type="InterPro" id="IPR013317">
    <property type="entry name" value="DnaA_dom"/>
</dbReference>
<dbReference type="InterPro" id="IPR027417">
    <property type="entry name" value="P-loop_NTPase"/>
</dbReference>
<dbReference type="InterPro" id="IPR010921">
    <property type="entry name" value="Trp_repressor/repl_initiator"/>
</dbReference>
<dbReference type="NCBIfam" id="TIGR00362">
    <property type="entry name" value="DnaA"/>
    <property type="match status" value="1"/>
</dbReference>
<dbReference type="PANTHER" id="PTHR30050">
    <property type="entry name" value="CHROMOSOMAL REPLICATION INITIATOR PROTEIN DNAA"/>
    <property type="match status" value="1"/>
</dbReference>
<dbReference type="PANTHER" id="PTHR30050:SF2">
    <property type="entry name" value="CHROMOSOMAL REPLICATION INITIATOR PROTEIN DNAA"/>
    <property type="match status" value="1"/>
</dbReference>
<dbReference type="Pfam" id="PF00308">
    <property type="entry name" value="Bac_DnaA"/>
    <property type="match status" value="1"/>
</dbReference>
<dbReference type="Pfam" id="PF08299">
    <property type="entry name" value="Bac_DnaA_C"/>
    <property type="match status" value="1"/>
</dbReference>
<dbReference type="PRINTS" id="PR00051">
    <property type="entry name" value="DNAA"/>
</dbReference>
<dbReference type="SMART" id="SM00382">
    <property type="entry name" value="AAA"/>
    <property type="match status" value="1"/>
</dbReference>
<dbReference type="SMART" id="SM00760">
    <property type="entry name" value="Bac_DnaA_C"/>
    <property type="match status" value="1"/>
</dbReference>
<dbReference type="SUPFAM" id="SSF52540">
    <property type="entry name" value="P-loop containing nucleoside triphosphate hydrolases"/>
    <property type="match status" value="1"/>
</dbReference>
<dbReference type="SUPFAM" id="SSF48295">
    <property type="entry name" value="TrpR-like"/>
    <property type="match status" value="1"/>
</dbReference>
<dbReference type="PROSITE" id="PS01008">
    <property type="entry name" value="DNAA"/>
    <property type="match status" value="1"/>
</dbReference>
<accession>P0DA69</accession>
<accession>P0A3A5</accession>
<accession>Q9L572</accession>
<evidence type="ECO:0000255" key="1">
    <source>
        <dbReference type="HAMAP-Rule" id="MF_00377"/>
    </source>
</evidence>
<name>DNAA_STRPQ</name>
<keyword id="KW-0067">ATP-binding</keyword>
<keyword id="KW-0963">Cytoplasm</keyword>
<keyword id="KW-0235">DNA replication</keyword>
<keyword id="KW-0238">DNA-binding</keyword>
<keyword id="KW-0446">Lipid-binding</keyword>
<keyword id="KW-0547">Nucleotide-binding</keyword>
<gene>
    <name evidence="1" type="primary">dnaA</name>
    <name type="ordered locus">SPs0001</name>
</gene>
<feature type="chain" id="PRO_0000411322" description="Chromosomal replication initiator protein DnaA">
    <location>
        <begin position="1"/>
        <end position="451"/>
    </location>
</feature>
<feature type="region of interest" description="Domain I, interacts with DnaA modulators" evidence="1">
    <location>
        <begin position="1"/>
        <end position="77"/>
    </location>
</feature>
<feature type="region of interest" description="Domain II" evidence="1">
    <location>
        <begin position="77"/>
        <end position="110"/>
    </location>
</feature>
<feature type="region of interest" description="Domain III, AAA+ region" evidence="1">
    <location>
        <begin position="111"/>
        <end position="329"/>
    </location>
</feature>
<feature type="region of interest" description="Domain IV, binds dsDNA" evidence="1">
    <location>
        <begin position="330"/>
        <end position="451"/>
    </location>
</feature>
<feature type="binding site" evidence="1">
    <location>
        <position position="155"/>
    </location>
    <ligand>
        <name>ATP</name>
        <dbReference type="ChEBI" id="CHEBI:30616"/>
    </ligand>
</feature>
<feature type="binding site" evidence="1">
    <location>
        <position position="157"/>
    </location>
    <ligand>
        <name>ATP</name>
        <dbReference type="ChEBI" id="CHEBI:30616"/>
    </ligand>
</feature>
<feature type="binding site" evidence="1">
    <location>
        <position position="158"/>
    </location>
    <ligand>
        <name>ATP</name>
        <dbReference type="ChEBI" id="CHEBI:30616"/>
    </ligand>
</feature>
<feature type="binding site" evidence="1">
    <location>
        <position position="159"/>
    </location>
    <ligand>
        <name>ATP</name>
        <dbReference type="ChEBI" id="CHEBI:30616"/>
    </ligand>
</feature>
<proteinExistence type="inferred from homology"/>
<protein>
    <recommendedName>
        <fullName evidence="1">Chromosomal replication initiator protein DnaA</fullName>
    </recommendedName>
</protein>